<organism>
    <name type="scientific">Myxococcus xanthus (strain DK1622)</name>
    <dbReference type="NCBI Taxonomy" id="246197"/>
    <lineage>
        <taxon>Bacteria</taxon>
        <taxon>Pseudomonadati</taxon>
        <taxon>Myxococcota</taxon>
        <taxon>Myxococcia</taxon>
        <taxon>Myxococcales</taxon>
        <taxon>Cystobacterineae</taxon>
        <taxon>Myxococcaceae</taxon>
        <taxon>Myxococcus</taxon>
    </lineage>
</organism>
<accession>Q1D4M4</accession>
<proteinExistence type="inferred from homology"/>
<dbReference type="EC" id="4.3.2.10" evidence="1"/>
<dbReference type="EMBL" id="CP000113">
    <property type="protein sequence ID" value="ABF91181.1"/>
    <property type="molecule type" value="Genomic_DNA"/>
</dbReference>
<dbReference type="SMR" id="Q1D4M4"/>
<dbReference type="STRING" id="246197.MXAN_4224"/>
<dbReference type="EnsemblBacteria" id="ABF91181">
    <property type="protein sequence ID" value="ABF91181"/>
    <property type="gene ID" value="MXAN_4224"/>
</dbReference>
<dbReference type="KEGG" id="mxa:MXAN_4224"/>
<dbReference type="eggNOG" id="COG0107">
    <property type="taxonomic scope" value="Bacteria"/>
</dbReference>
<dbReference type="HOGENOM" id="CLU_048577_4_0_7"/>
<dbReference type="OrthoDB" id="9807749at2"/>
<dbReference type="UniPathway" id="UPA00031">
    <property type="reaction ID" value="UER00010"/>
</dbReference>
<dbReference type="Proteomes" id="UP000002402">
    <property type="component" value="Chromosome"/>
</dbReference>
<dbReference type="GO" id="GO:0005737">
    <property type="term" value="C:cytoplasm"/>
    <property type="evidence" value="ECO:0007669"/>
    <property type="project" value="UniProtKB-SubCell"/>
</dbReference>
<dbReference type="GO" id="GO:0000107">
    <property type="term" value="F:imidazoleglycerol-phosphate synthase activity"/>
    <property type="evidence" value="ECO:0007669"/>
    <property type="project" value="UniProtKB-UniRule"/>
</dbReference>
<dbReference type="GO" id="GO:0016829">
    <property type="term" value="F:lyase activity"/>
    <property type="evidence" value="ECO:0007669"/>
    <property type="project" value="UniProtKB-KW"/>
</dbReference>
<dbReference type="GO" id="GO:0000105">
    <property type="term" value="P:L-histidine biosynthetic process"/>
    <property type="evidence" value="ECO:0007669"/>
    <property type="project" value="UniProtKB-UniRule"/>
</dbReference>
<dbReference type="CDD" id="cd04731">
    <property type="entry name" value="HisF"/>
    <property type="match status" value="1"/>
</dbReference>
<dbReference type="FunFam" id="3.20.20.70:FF:000006">
    <property type="entry name" value="Imidazole glycerol phosphate synthase subunit HisF"/>
    <property type="match status" value="1"/>
</dbReference>
<dbReference type="Gene3D" id="3.20.20.70">
    <property type="entry name" value="Aldolase class I"/>
    <property type="match status" value="1"/>
</dbReference>
<dbReference type="HAMAP" id="MF_01013">
    <property type="entry name" value="HisF"/>
    <property type="match status" value="1"/>
</dbReference>
<dbReference type="InterPro" id="IPR013785">
    <property type="entry name" value="Aldolase_TIM"/>
</dbReference>
<dbReference type="InterPro" id="IPR006062">
    <property type="entry name" value="His_biosynth"/>
</dbReference>
<dbReference type="InterPro" id="IPR004651">
    <property type="entry name" value="HisF"/>
</dbReference>
<dbReference type="InterPro" id="IPR050064">
    <property type="entry name" value="IGPS_HisA/HisF"/>
</dbReference>
<dbReference type="InterPro" id="IPR011060">
    <property type="entry name" value="RibuloseP-bd_barrel"/>
</dbReference>
<dbReference type="NCBIfam" id="TIGR00735">
    <property type="entry name" value="hisF"/>
    <property type="match status" value="1"/>
</dbReference>
<dbReference type="PANTHER" id="PTHR21235:SF2">
    <property type="entry name" value="IMIDAZOLE GLYCEROL PHOSPHATE SYNTHASE HISHF"/>
    <property type="match status" value="1"/>
</dbReference>
<dbReference type="PANTHER" id="PTHR21235">
    <property type="entry name" value="IMIDAZOLE GLYCEROL PHOSPHATE SYNTHASE SUBUNIT HISF/H IGP SYNTHASE SUBUNIT HISF/H"/>
    <property type="match status" value="1"/>
</dbReference>
<dbReference type="Pfam" id="PF00977">
    <property type="entry name" value="His_biosynth"/>
    <property type="match status" value="1"/>
</dbReference>
<dbReference type="SUPFAM" id="SSF51366">
    <property type="entry name" value="Ribulose-phoshate binding barrel"/>
    <property type="match status" value="1"/>
</dbReference>
<keyword id="KW-0028">Amino-acid biosynthesis</keyword>
<keyword id="KW-0963">Cytoplasm</keyword>
<keyword id="KW-0368">Histidine biosynthesis</keyword>
<keyword id="KW-0456">Lyase</keyword>
<keyword id="KW-1185">Reference proteome</keyword>
<reference key="1">
    <citation type="journal article" date="2006" name="Proc. Natl. Acad. Sci. U.S.A.">
        <title>Evolution of sensory complexity recorded in a myxobacterial genome.</title>
        <authorList>
            <person name="Goldman B.S."/>
            <person name="Nierman W.C."/>
            <person name="Kaiser D."/>
            <person name="Slater S.C."/>
            <person name="Durkin A.S."/>
            <person name="Eisen J.A."/>
            <person name="Ronning C.M."/>
            <person name="Barbazuk W.B."/>
            <person name="Blanchard M."/>
            <person name="Field C."/>
            <person name="Halling C."/>
            <person name="Hinkle G."/>
            <person name="Iartchuk O."/>
            <person name="Kim H.S."/>
            <person name="Mackenzie C."/>
            <person name="Madupu R."/>
            <person name="Miller N."/>
            <person name="Shvartsbeyn A."/>
            <person name="Sullivan S.A."/>
            <person name="Vaudin M."/>
            <person name="Wiegand R."/>
            <person name="Kaplan H.B."/>
        </authorList>
    </citation>
    <scope>NUCLEOTIDE SEQUENCE [LARGE SCALE GENOMIC DNA]</scope>
    <source>
        <strain>DK1622</strain>
    </source>
</reference>
<protein>
    <recommendedName>
        <fullName evidence="1">Imidazole glycerol phosphate synthase subunit HisF</fullName>
        <ecNumber evidence="1">4.3.2.10</ecNumber>
    </recommendedName>
    <alternativeName>
        <fullName evidence="1">IGP synthase cyclase subunit</fullName>
    </alternativeName>
    <alternativeName>
        <fullName evidence="1">IGP synthase subunit HisF</fullName>
    </alternativeName>
    <alternativeName>
        <fullName evidence="1">ImGP synthase subunit HisF</fullName>
        <shortName evidence="1">IGPS subunit HisF</shortName>
    </alternativeName>
</protein>
<gene>
    <name evidence="1" type="primary">hisF</name>
    <name type="ordered locus">MXAN_4224</name>
</gene>
<evidence type="ECO:0000255" key="1">
    <source>
        <dbReference type="HAMAP-Rule" id="MF_01013"/>
    </source>
</evidence>
<name>HIS6_MYXXD</name>
<comment type="function">
    <text evidence="1">IGPS catalyzes the conversion of PRFAR and glutamine to IGP, AICAR and glutamate. The HisF subunit catalyzes the cyclization activity that produces IGP and AICAR from PRFAR using the ammonia provided by the HisH subunit.</text>
</comment>
<comment type="catalytic activity">
    <reaction evidence="1">
        <text>5-[(5-phospho-1-deoxy-D-ribulos-1-ylimino)methylamino]-1-(5-phospho-beta-D-ribosyl)imidazole-4-carboxamide + L-glutamine = D-erythro-1-(imidazol-4-yl)glycerol 3-phosphate + 5-amino-1-(5-phospho-beta-D-ribosyl)imidazole-4-carboxamide + L-glutamate + H(+)</text>
        <dbReference type="Rhea" id="RHEA:24793"/>
        <dbReference type="ChEBI" id="CHEBI:15378"/>
        <dbReference type="ChEBI" id="CHEBI:29985"/>
        <dbReference type="ChEBI" id="CHEBI:58278"/>
        <dbReference type="ChEBI" id="CHEBI:58359"/>
        <dbReference type="ChEBI" id="CHEBI:58475"/>
        <dbReference type="ChEBI" id="CHEBI:58525"/>
        <dbReference type="EC" id="4.3.2.10"/>
    </reaction>
</comment>
<comment type="pathway">
    <text evidence="1">Amino-acid biosynthesis; L-histidine biosynthesis; L-histidine from 5-phospho-alpha-D-ribose 1-diphosphate: step 5/9.</text>
</comment>
<comment type="subunit">
    <text evidence="1">Heterodimer of HisH and HisF.</text>
</comment>
<comment type="subcellular location">
    <subcellularLocation>
        <location evidence="1">Cytoplasm</location>
    </subcellularLocation>
</comment>
<comment type="similarity">
    <text evidence="1">Belongs to the HisA/HisF family.</text>
</comment>
<feature type="chain" id="PRO_1000063101" description="Imidazole glycerol phosphate synthase subunit HisF">
    <location>
        <begin position="1"/>
        <end position="253"/>
    </location>
</feature>
<feature type="active site" evidence="1">
    <location>
        <position position="11"/>
    </location>
</feature>
<feature type="active site" evidence="1">
    <location>
        <position position="130"/>
    </location>
</feature>
<sequence length="253" mass="26569">MLTRRLVVCLDVKGGRVVKGVQFEGLRDVGDPVELARRYEAEGADELTFLDISASAEERDTLWELVRRTAEQLFIPLAVGGGVRTVDDVGRALRAGADKVSINSAAVANPALLTACAERFGAQCVVASIDAKRDGDRWRVYTHGGRKPTDLDAVAWARECVARGAGEVLLTSIDRDGARTGYDLALTRAVSEAVDVPVIASGGAGSAAHVRAAFQEGGADAALVAGILHDGVTTVGAIKALLRESGLHIRSLT</sequence>